<gene>
    <name type="primary">guf1</name>
    <name type="ORF">An09g04110</name>
</gene>
<proteinExistence type="inferred from homology"/>
<accession>A2QU25</accession>
<evidence type="ECO:0000255" key="1">
    <source>
        <dbReference type="HAMAP-Rule" id="MF_03137"/>
    </source>
</evidence>
<evidence type="ECO:0000305" key="2"/>
<name>GUF1_ASPNC</name>
<protein>
    <recommendedName>
        <fullName evidence="1">Translation factor guf1, mitochondrial</fullName>
        <ecNumber>3.6.5.-</ecNumber>
    </recommendedName>
    <alternativeName>
        <fullName evidence="1">Elongation factor 4 homolog</fullName>
        <shortName evidence="1">EF-4</shortName>
    </alternativeName>
    <alternativeName>
        <fullName evidence="1">GTPase guf1</fullName>
    </alternativeName>
    <alternativeName>
        <fullName evidence="1">Ribosomal back-translocase</fullName>
    </alternativeName>
</protein>
<reference key="1">
    <citation type="journal article" date="2007" name="Nat. Biotechnol.">
        <title>Genome sequencing and analysis of the versatile cell factory Aspergillus niger CBS 513.88.</title>
        <authorList>
            <person name="Pel H.J."/>
            <person name="de Winde J.H."/>
            <person name="Archer D.B."/>
            <person name="Dyer P.S."/>
            <person name="Hofmann G."/>
            <person name="Schaap P.J."/>
            <person name="Turner G."/>
            <person name="de Vries R.P."/>
            <person name="Albang R."/>
            <person name="Albermann K."/>
            <person name="Andersen M.R."/>
            <person name="Bendtsen J.D."/>
            <person name="Benen J.A.E."/>
            <person name="van den Berg M."/>
            <person name="Breestraat S."/>
            <person name="Caddick M.X."/>
            <person name="Contreras R."/>
            <person name="Cornell M."/>
            <person name="Coutinho P.M."/>
            <person name="Danchin E.G.J."/>
            <person name="Debets A.J.M."/>
            <person name="Dekker P."/>
            <person name="van Dijck P.W.M."/>
            <person name="van Dijk A."/>
            <person name="Dijkhuizen L."/>
            <person name="Driessen A.J.M."/>
            <person name="d'Enfert C."/>
            <person name="Geysens S."/>
            <person name="Goosen C."/>
            <person name="Groot G.S.P."/>
            <person name="de Groot P.W.J."/>
            <person name="Guillemette T."/>
            <person name="Henrissat B."/>
            <person name="Herweijer M."/>
            <person name="van den Hombergh J.P.T.W."/>
            <person name="van den Hondel C.A.M.J.J."/>
            <person name="van der Heijden R.T.J.M."/>
            <person name="van der Kaaij R.M."/>
            <person name="Klis F.M."/>
            <person name="Kools H.J."/>
            <person name="Kubicek C.P."/>
            <person name="van Kuyk P.A."/>
            <person name="Lauber J."/>
            <person name="Lu X."/>
            <person name="van der Maarel M.J.E.C."/>
            <person name="Meulenberg R."/>
            <person name="Menke H."/>
            <person name="Mortimer M.A."/>
            <person name="Nielsen J."/>
            <person name="Oliver S.G."/>
            <person name="Olsthoorn M."/>
            <person name="Pal K."/>
            <person name="van Peij N.N.M.E."/>
            <person name="Ram A.F.J."/>
            <person name="Rinas U."/>
            <person name="Roubos J.A."/>
            <person name="Sagt C.M.J."/>
            <person name="Schmoll M."/>
            <person name="Sun J."/>
            <person name="Ussery D."/>
            <person name="Varga J."/>
            <person name="Vervecken W."/>
            <person name="van de Vondervoort P.J.J."/>
            <person name="Wedler H."/>
            <person name="Woesten H.A.B."/>
            <person name="Zeng A.-P."/>
            <person name="van Ooyen A.J.J."/>
            <person name="Visser J."/>
            <person name="Stam H."/>
        </authorList>
    </citation>
    <scope>NUCLEOTIDE SEQUENCE [LARGE SCALE GENOMIC DNA]</scope>
    <source>
        <strain>ATCC MYA-4892 / CBS 513.88 / FGSC A1513</strain>
    </source>
</reference>
<comment type="function">
    <text evidence="1">Promotes mitochondrial protein synthesis. May act as a fidelity factor of the translation reaction, by catalyzing a one-codon backward translocation of tRNAs on improperly translocated ribosomes. Binds to mitochondrial ribosomes in a GTP-dependent manner.</text>
</comment>
<comment type="catalytic activity">
    <reaction evidence="1">
        <text>GTP + H2O = GDP + phosphate + H(+)</text>
        <dbReference type="Rhea" id="RHEA:19669"/>
        <dbReference type="ChEBI" id="CHEBI:15377"/>
        <dbReference type="ChEBI" id="CHEBI:15378"/>
        <dbReference type="ChEBI" id="CHEBI:37565"/>
        <dbReference type="ChEBI" id="CHEBI:43474"/>
        <dbReference type="ChEBI" id="CHEBI:58189"/>
    </reaction>
</comment>
<comment type="subcellular location">
    <subcellularLocation>
        <location evidence="1">Mitochondrion inner membrane</location>
        <topology evidence="1">Peripheral membrane protein</topology>
        <orientation evidence="1">Matrix side</orientation>
    </subcellularLocation>
</comment>
<comment type="similarity">
    <text evidence="2">Belongs to the TRAFAC class translation factor GTPase superfamily. Classic translation factor GTPase family. LepA subfamily.</text>
</comment>
<sequence length="666" mass="74122">MRGCLQLARWLRAAPKCPAASLLKPPSGLANPARFFTTSTACWASRSRAPASQPSSDLESRIAAIPIDRYRNFCIVAHVDHGKSTLSDRLLELTGTIQPGMNKQVLDKLDVERERGITVKAQTCTMIYNHNGEDYLLHLVDTPGHVDFRAEVSRSYASCGGALLLVDASQGIQAQTVANFYLAFSQGLELIPVINKVDLPSADPERALDQMEQSFELDTESAVLVSAKTGLNVQQLLPTVVEKIPAPVGDVNNPLRMLLVDSWYDSYRGVICLVRVFDGEIRAGDQLVSFATGIKYFVGEVGIMYPNETAQSVLRAGQVGYIFFNPGMKRSKEAKIGDTYTKVGFEKVVEPLPGFEEPKAMVFVAAYPVDADHFEHLEDSINQLCLNDRSITVQKESSHALGAGFRLGFLGTLHCSVFEDRLRQEHGASIIITPPSVPVKLIWKDGKEEIISNPAKFPEDEELRGKISEIQEPYVVATLTLPDEYLGKVIELCESNRGVQKSLEYFTSTQVILKYELPLAQLVDDFFGKLKGSTKGYATLDYEESAWQTSNIVKLQLLVNKAPVDAVARLVHYSQVERLGRQWVTKFKEHVDRQLFEIVIQAAVGRKVVARETVKPYRKDVLAKLHASDVSRRRKLLEKQKEGRKKLRAVGNVVIEQKAFQAFLAK</sequence>
<feature type="transit peptide" description="Mitochondrion" evidence="1">
    <location>
        <begin position="1"/>
        <end position="43"/>
    </location>
</feature>
<feature type="chain" id="PRO_5000220451" description="Translation factor guf1, mitochondrial">
    <location>
        <begin position="44"/>
        <end position="666"/>
    </location>
</feature>
<feature type="domain" description="tr-type G">
    <location>
        <begin position="68"/>
        <end position="248"/>
    </location>
</feature>
<feature type="binding site" evidence="1">
    <location>
        <begin position="77"/>
        <end position="84"/>
    </location>
    <ligand>
        <name>GTP</name>
        <dbReference type="ChEBI" id="CHEBI:37565"/>
    </ligand>
</feature>
<feature type="binding site" evidence="1">
    <location>
        <begin position="141"/>
        <end position="145"/>
    </location>
    <ligand>
        <name>GTP</name>
        <dbReference type="ChEBI" id="CHEBI:37565"/>
    </ligand>
</feature>
<feature type="binding site" evidence="1">
    <location>
        <begin position="195"/>
        <end position="198"/>
    </location>
    <ligand>
        <name>GTP</name>
        <dbReference type="ChEBI" id="CHEBI:37565"/>
    </ligand>
</feature>
<organism>
    <name type="scientific">Aspergillus niger (strain ATCC MYA-4892 / CBS 513.88 / FGSC A1513)</name>
    <dbReference type="NCBI Taxonomy" id="425011"/>
    <lineage>
        <taxon>Eukaryota</taxon>
        <taxon>Fungi</taxon>
        <taxon>Dikarya</taxon>
        <taxon>Ascomycota</taxon>
        <taxon>Pezizomycotina</taxon>
        <taxon>Eurotiomycetes</taxon>
        <taxon>Eurotiomycetidae</taxon>
        <taxon>Eurotiales</taxon>
        <taxon>Aspergillaceae</taxon>
        <taxon>Aspergillus</taxon>
        <taxon>Aspergillus subgen. Circumdati</taxon>
    </lineage>
</organism>
<keyword id="KW-0342">GTP-binding</keyword>
<keyword id="KW-0378">Hydrolase</keyword>
<keyword id="KW-0472">Membrane</keyword>
<keyword id="KW-0496">Mitochondrion</keyword>
<keyword id="KW-0999">Mitochondrion inner membrane</keyword>
<keyword id="KW-0547">Nucleotide-binding</keyword>
<keyword id="KW-0648">Protein biosynthesis</keyword>
<keyword id="KW-1185">Reference proteome</keyword>
<keyword id="KW-0809">Transit peptide</keyword>
<dbReference type="EC" id="3.6.5.-"/>
<dbReference type="EMBL" id="AM270199">
    <property type="protein sequence ID" value="CAK96853.1"/>
    <property type="molecule type" value="Genomic_DNA"/>
</dbReference>
<dbReference type="RefSeq" id="XP_001393727.1">
    <property type="nucleotide sequence ID" value="XM_001393690.1"/>
</dbReference>
<dbReference type="SMR" id="A2QU25"/>
<dbReference type="EnsemblFungi" id="CAK96853">
    <property type="protein sequence ID" value="CAK96853"/>
    <property type="gene ID" value="An09g04110"/>
</dbReference>
<dbReference type="GeneID" id="4983946"/>
<dbReference type="KEGG" id="ang:An09g04110"/>
<dbReference type="VEuPathDB" id="FungiDB:An09g04110"/>
<dbReference type="HOGENOM" id="CLU_009995_3_1_1"/>
<dbReference type="Proteomes" id="UP000006706">
    <property type="component" value="Chromosome 1L"/>
</dbReference>
<dbReference type="GO" id="GO:0005743">
    <property type="term" value="C:mitochondrial inner membrane"/>
    <property type="evidence" value="ECO:0007669"/>
    <property type="project" value="UniProtKB-SubCell"/>
</dbReference>
<dbReference type="GO" id="GO:0005759">
    <property type="term" value="C:mitochondrial matrix"/>
    <property type="evidence" value="ECO:0007669"/>
    <property type="project" value="UniProtKB-UniRule"/>
</dbReference>
<dbReference type="GO" id="GO:0005525">
    <property type="term" value="F:GTP binding"/>
    <property type="evidence" value="ECO:0007669"/>
    <property type="project" value="UniProtKB-UniRule"/>
</dbReference>
<dbReference type="GO" id="GO:0003924">
    <property type="term" value="F:GTPase activity"/>
    <property type="evidence" value="ECO:0007669"/>
    <property type="project" value="UniProtKB-UniRule"/>
</dbReference>
<dbReference type="GO" id="GO:0097177">
    <property type="term" value="F:mitochondrial ribosome binding"/>
    <property type="evidence" value="ECO:0007669"/>
    <property type="project" value="EnsemblFungi"/>
</dbReference>
<dbReference type="GO" id="GO:0045727">
    <property type="term" value="P:positive regulation of translation"/>
    <property type="evidence" value="ECO:0007669"/>
    <property type="project" value="UniProtKB-UniRule"/>
</dbReference>
<dbReference type="GO" id="GO:0006412">
    <property type="term" value="P:translation"/>
    <property type="evidence" value="ECO:0007669"/>
    <property type="project" value="UniProtKB-KW"/>
</dbReference>
<dbReference type="CDD" id="cd03699">
    <property type="entry name" value="EF4_II"/>
    <property type="match status" value="1"/>
</dbReference>
<dbReference type="CDD" id="cd01890">
    <property type="entry name" value="LepA"/>
    <property type="match status" value="1"/>
</dbReference>
<dbReference type="CDD" id="cd03709">
    <property type="entry name" value="lepA_C"/>
    <property type="match status" value="1"/>
</dbReference>
<dbReference type="FunFam" id="3.40.50.300:FF:000078">
    <property type="entry name" value="Elongation factor 4"/>
    <property type="match status" value="1"/>
</dbReference>
<dbReference type="FunFam" id="2.40.30.10:FF:000015">
    <property type="entry name" value="Translation factor GUF1, mitochondrial"/>
    <property type="match status" value="1"/>
</dbReference>
<dbReference type="FunFam" id="3.30.70.240:FF:000007">
    <property type="entry name" value="Translation factor GUF1, mitochondrial"/>
    <property type="match status" value="1"/>
</dbReference>
<dbReference type="FunFam" id="3.30.70.2570:FF:000001">
    <property type="entry name" value="Translation factor GUF1, mitochondrial"/>
    <property type="match status" value="1"/>
</dbReference>
<dbReference type="FunFam" id="3.30.70.870:FF:000004">
    <property type="entry name" value="Translation factor GUF1, mitochondrial"/>
    <property type="match status" value="1"/>
</dbReference>
<dbReference type="Gene3D" id="3.30.70.240">
    <property type="match status" value="1"/>
</dbReference>
<dbReference type="Gene3D" id="3.30.70.2570">
    <property type="entry name" value="Elongation factor 4, C-terminal domain"/>
    <property type="match status" value="1"/>
</dbReference>
<dbReference type="Gene3D" id="3.30.70.870">
    <property type="entry name" value="Elongation Factor G (Translational Gtpase), domain 3"/>
    <property type="match status" value="1"/>
</dbReference>
<dbReference type="Gene3D" id="3.40.50.300">
    <property type="entry name" value="P-loop containing nucleotide triphosphate hydrolases"/>
    <property type="match status" value="1"/>
</dbReference>
<dbReference type="Gene3D" id="2.40.30.10">
    <property type="entry name" value="Translation factors"/>
    <property type="match status" value="1"/>
</dbReference>
<dbReference type="HAMAP" id="MF_00071">
    <property type="entry name" value="LepA"/>
    <property type="match status" value="1"/>
</dbReference>
<dbReference type="InterPro" id="IPR006297">
    <property type="entry name" value="EF-4"/>
</dbReference>
<dbReference type="InterPro" id="IPR035647">
    <property type="entry name" value="EFG_III/V"/>
</dbReference>
<dbReference type="InterPro" id="IPR000640">
    <property type="entry name" value="EFG_V-like"/>
</dbReference>
<dbReference type="InterPro" id="IPR031157">
    <property type="entry name" value="G_TR_CS"/>
</dbReference>
<dbReference type="InterPro" id="IPR038363">
    <property type="entry name" value="LepA_C_sf"/>
</dbReference>
<dbReference type="InterPro" id="IPR013842">
    <property type="entry name" value="LepA_CTD"/>
</dbReference>
<dbReference type="InterPro" id="IPR035654">
    <property type="entry name" value="LepA_IV"/>
</dbReference>
<dbReference type="InterPro" id="IPR027417">
    <property type="entry name" value="P-loop_NTPase"/>
</dbReference>
<dbReference type="InterPro" id="IPR005225">
    <property type="entry name" value="Small_GTP-bd"/>
</dbReference>
<dbReference type="InterPro" id="IPR000795">
    <property type="entry name" value="T_Tr_GTP-bd_dom"/>
</dbReference>
<dbReference type="InterPro" id="IPR009000">
    <property type="entry name" value="Transl_B-barrel_sf"/>
</dbReference>
<dbReference type="NCBIfam" id="TIGR01393">
    <property type="entry name" value="lepA"/>
    <property type="match status" value="1"/>
</dbReference>
<dbReference type="NCBIfam" id="TIGR00231">
    <property type="entry name" value="small_GTP"/>
    <property type="match status" value="1"/>
</dbReference>
<dbReference type="PANTHER" id="PTHR43512:SF7">
    <property type="entry name" value="TRANSLATION FACTOR GUF1, MITOCHONDRIAL"/>
    <property type="match status" value="1"/>
</dbReference>
<dbReference type="PANTHER" id="PTHR43512">
    <property type="entry name" value="TRANSLATION FACTOR GUF1-RELATED"/>
    <property type="match status" value="1"/>
</dbReference>
<dbReference type="Pfam" id="PF00679">
    <property type="entry name" value="EFG_C"/>
    <property type="match status" value="1"/>
</dbReference>
<dbReference type="Pfam" id="PF00009">
    <property type="entry name" value="GTP_EFTU"/>
    <property type="match status" value="1"/>
</dbReference>
<dbReference type="Pfam" id="PF06421">
    <property type="entry name" value="LepA_C"/>
    <property type="match status" value="1"/>
</dbReference>
<dbReference type="PRINTS" id="PR00315">
    <property type="entry name" value="ELONGATNFCT"/>
</dbReference>
<dbReference type="SUPFAM" id="SSF54980">
    <property type="entry name" value="EF-G C-terminal domain-like"/>
    <property type="match status" value="2"/>
</dbReference>
<dbReference type="SUPFAM" id="SSF52540">
    <property type="entry name" value="P-loop containing nucleoside triphosphate hydrolases"/>
    <property type="match status" value="1"/>
</dbReference>
<dbReference type="SUPFAM" id="SSF50447">
    <property type="entry name" value="Translation proteins"/>
    <property type="match status" value="1"/>
</dbReference>
<dbReference type="PROSITE" id="PS00301">
    <property type="entry name" value="G_TR_1"/>
    <property type="match status" value="1"/>
</dbReference>
<dbReference type="PROSITE" id="PS51722">
    <property type="entry name" value="G_TR_2"/>
    <property type="match status" value="1"/>
</dbReference>